<organismHost>
    <name type="scientific">Homo sapiens</name>
    <name type="common">Human</name>
    <dbReference type="NCBI Taxonomy" id="9606"/>
</organismHost>
<organism>
    <name type="scientific">Human immunodeficiency virus type 1 group M subtype C (isolate ETH2220)</name>
    <name type="common">HIV-1</name>
    <dbReference type="NCBI Taxonomy" id="388796"/>
    <lineage>
        <taxon>Viruses</taxon>
        <taxon>Riboviria</taxon>
        <taxon>Pararnavirae</taxon>
        <taxon>Artverviricota</taxon>
        <taxon>Revtraviricetes</taxon>
        <taxon>Ortervirales</taxon>
        <taxon>Retroviridae</taxon>
        <taxon>Orthoretrovirinae</taxon>
        <taxon>Lentivirus</taxon>
        <taxon>Human immunodeficiency virus type 1</taxon>
    </lineage>
</organism>
<comment type="function">
    <text evidence="1">During virus replication, may deplete host UNG protein, and incude G2-M cell cycle arrest. Acts by targeting specific host proteins for degradation by the 26S proteasome, through association with the cellular CUL4A-DDB1 E3 ligase complex by direct interaction with host VPRPB/DCAF-1. Cell cycle arrest reportedly occurs within hours of infection and is not blocked by antiviral agents, suggesting that it is initiated by the VPR carried into the virion. Additionally, VPR induces apoptosis in a cell cycle dependent manner suggesting that these two effects are mechanistically linked. Detected in the serum and cerebrospinal fluid of AIDS patient, VPR may also induce cell death to bystander cells.</text>
</comment>
<comment type="function">
    <text evidence="1">During virus entry, plays a role in the transport of the viral pre-integration (PIC) complex to the host nucleus. This function is crucial for viral infection of non-dividing macrophages. May act directly at the nuclear pore complex, by binding nucleoporins phenylalanine-glycine (FG)-repeat regions.</text>
</comment>
<comment type="subunit">
    <text evidence="1">Homooligomer, may form homodimer. Interacts with p6-gag region of the Pr55 Gag precursor protein through a (Leu-X-X)4 motif near the C-terminus of the P6gag protein. Interacts with host UNG. May interact with host RAD23A/HHR23A. Interacts with host VPRBP/DCAF1, leading to hijack the CUL4A-RBX1-DDB1-DCAF1/VPRBP complex, mediating ubiquitination of host proteins such as TERT and ZGPAT and arrest of the cell cycle in G2 phase.</text>
</comment>
<comment type="subcellular location">
    <subcellularLocation>
        <location evidence="1">Virion</location>
    </subcellularLocation>
    <subcellularLocation>
        <location evidence="1">Host nucleus</location>
    </subcellularLocation>
    <subcellularLocation>
        <location evidence="1">Host extracellular space</location>
    </subcellularLocation>
    <text evidence="1">Incorporation into virion is dependent on p6 GAG sequences. Lacks a canonical nuclear localization signal, thus import into nucleus may function independently of the human importin pathway. Detected in high quantity in the serum and cerebrospinal fluid of AIDS patient.</text>
</comment>
<comment type="PTM">
    <text evidence="1">Phosphorylated on several residues by host. These phosphorylations regulate VPR activity for the nuclear import of the HIV-1 pre-integration complex.</text>
</comment>
<comment type="miscellaneous">
    <text evidence="1">HIV-1 lineages are divided in three main groups, M (for Major), O (for Outlier), and N (for New, or Non-M, Non-O). The vast majority of strains found worldwide belong to the group M. Group O seems to be endemic to and largely confined to Cameroon and neighboring countries in West Central Africa, where these viruses represent a small minority of HIV-1 strains. The group N is represented by a limited number of isolates from Cameroonian persons. The group M is further subdivided in 9 clades or subtypes (A to D, F to H, J and K).</text>
</comment>
<comment type="similarity">
    <text evidence="1">Belongs to the HIV-1 VPR protein family.</text>
</comment>
<protein>
    <recommendedName>
        <fullName evidence="1">Protein Vpr</fullName>
    </recommendedName>
    <alternativeName>
        <fullName evidence="1">R ORF protein</fullName>
    </alternativeName>
    <alternativeName>
        <fullName evidence="1">Viral protein R</fullName>
    </alternativeName>
</protein>
<sequence length="96" mass="11420">MEQAPEDQGPQREPYNEWALELLEELKQEAVRHFPRPWLHNLGQYIYETYGDTWSGVEALIRTLQQLMFIHFRIGCQHSRIGILRQRRARNGASRS</sequence>
<feature type="chain" id="PRO_0000246758" description="Protein Vpr">
    <location>
        <begin position="1"/>
        <end position="96"/>
    </location>
</feature>
<feature type="region of interest" description="Homooligomerization" evidence="1">
    <location>
        <begin position="1"/>
        <end position="42"/>
    </location>
</feature>
<feature type="modified residue" description="Phosphoserine; by host" evidence="1">
    <location>
        <position position="79"/>
    </location>
</feature>
<feature type="modified residue" description="Phosphoserine; by host" evidence="1">
    <location>
        <position position="94"/>
    </location>
</feature>
<feature type="modified residue" description="Phosphoserine; by host" evidence="1">
    <location>
        <position position="96"/>
    </location>
</feature>
<dbReference type="EMBL" id="U46016">
    <property type="protein sequence ID" value="AAB36503.1"/>
    <property type="molecule type" value="Genomic_DNA"/>
</dbReference>
<dbReference type="SMR" id="Q75004"/>
<dbReference type="Proteomes" id="UP000007694">
    <property type="component" value="Segment"/>
</dbReference>
<dbReference type="GO" id="GO:0043657">
    <property type="term" value="C:host cell"/>
    <property type="evidence" value="ECO:0007669"/>
    <property type="project" value="GOC"/>
</dbReference>
<dbReference type="GO" id="GO:0042025">
    <property type="term" value="C:host cell nucleus"/>
    <property type="evidence" value="ECO:0007669"/>
    <property type="project" value="UniProtKB-SubCell"/>
</dbReference>
<dbReference type="GO" id="GO:0043655">
    <property type="term" value="C:host extracellular space"/>
    <property type="evidence" value="ECO:0007669"/>
    <property type="project" value="UniProtKB-SubCell"/>
</dbReference>
<dbReference type="GO" id="GO:0044423">
    <property type="term" value="C:virion component"/>
    <property type="evidence" value="ECO:0007669"/>
    <property type="project" value="UniProtKB-UniRule"/>
</dbReference>
<dbReference type="GO" id="GO:0006351">
    <property type="term" value="P:DNA-templated transcription"/>
    <property type="evidence" value="ECO:0007669"/>
    <property type="project" value="UniProtKB-UniRule"/>
</dbReference>
<dbReference type="GO" id="GO:0034220">
    <property type="term" value="P:monoatomic ion transmembrane transport"/>
    <property type="evidence" value="ECO:0007669"/>
    <property type="project" value="UniProtKB-KW"/>
</dbReference>
<dbReference type="GO" id="GO:0051260">
    <property type="term" value="P:protein homooligomerization"/>
    <property type="evidence" value="ECO:0007669"/>
    <property type="project" value="UniProtKB-UniRule"/>
</dbReference>
<dbReference type="GO" id="GO:0006355">
    <property type="term" value="P:regulation of DNA-templated transcription"/>
    <property type="evidence" value="ECO:0007669"/>
    <property type="project" value="UniProtKB-UniRule"/>
</dbReference>
<dbReference type="GO" id="GO:0046718">
    <property type="term" value="P:symbiont entry into host cell"/>
    <property type="evidence" value="ECO:0007669"/>
    <property type="project" value="UniProtKB-KW"/>
</dbReference>
<dbReference type="GO" id="GO:0052151">
    <property type="term" value="P:symbiont-mediated activation of host apoptosis"/>
    <property type="evidence" value="ECO:0007669"/>
    <property type="project" value="UniProtKB-UniRule"/>
</dbReference>
<dbReference type="GO" id="GO:0039592">
    <property type="term" value="P:symbiont-mediated arrest of host cell cycle during G2/M transition"/>
    <property type="evidence" value="ECO:0007669"/>
    <property type="project" value="UniProtKB-UniRule"/>
</dbReference>
<dbReference type="GO" id="GO:0075732">
    <property type="term" value="P:viral penetration into host nucleus"/>
    <property type="evidence" value="ECO:0007669"/>
    <property type="project" value="UniProtKB-UniRule"/>
</dbReference>
<dbReference type="FunFam" id="1.20.5.90:FF:000001">
    <property type="entry name" value="Protein Vpr"/>
    <property type="match status" value="1"/>
</dbReference>
<dbReference type="Gene3D" id="6.10.210.10">
    <property type="match status" value="1"/>
</dbReference>
<dbReference type="Gene3D" id="1.20.5.90">
    <property type="entry name" value="VpR/VpX protein, C-terminal domain"/>
    <property type="match status" value="1"/>
</dbReference>
<dbReference type="HAMAP" id="MF_04080">
    <property type="entry name" value="HIV_VPR"/>
    <property type="match status" value="1"/>
</dbReference>
<dbReference type="InterPro" id="IPR000012">
    <property type="entry name" value="RetroV_VpR/X"/>
</dbReference>
<dbReference type="Pfam" id="PF00522">
    <property type="entry name" value="VPR"/>
    <property type="match status" value="1"/>
</dbReference>
<dbReference type="PRINTS" id="PR00444">
    <property type="entry name" value="HIVVPRVPX"/>
</dbReference>
<gene>
    <name evidence="1" type="primary">vpr</name>
</gene>
<keyword id="KW-0010">Activator</keyword>
<keyword id="KW-0014">AIDS</keyword>
<keyword id="KW-0053">Apoptosis</keyword>
<keyword id="KW-0131">Cell cycle</keyword>
<keyword id="KW-1079">Host G2/M cell cycle arrest by virus</keyword>
<keyword id="KW-1048">Host nucleus</keyword>
<keyword id="KW-0945">Host-virus interaction</keyword>
<keyword id="KW-0407">Ion channel</keyword>
<keyword id="KW-0406">Ion transport</keyword>
<keyword id="KW-1121">Modulation of host cell cycle by virus</keyword>
<keyword id="KW-0597">Phosphoprotein</keyword>
<keyword id="KW-1185">Reference proteome</keyword>
<keyword id="KW-0804">Transcription</keyword>
<keyword id="KW-0805">Transcription regulation</keyword>
<keyword id="KW-0813">Transport</keyword>
<keyword id="KW-1163">Viral penetration into host nucleus</keyword>
<keyword id="KW-0946">Virion</keyword>
<keyword id="KW-1160">Virus entry into host cell</keyword>
<reference key="1">
    <citation type="journal article" date="1996" name="AIDS Res. Hum. Retroviruses">
        <title>Full-length sequence of an ethiopian human immunodeficiency virus type 1 (HIV-1) isolate of genetic subtype C.</title>
        <authorList>
            <person name="Salminen M.O."/>
            <person name="Johansson B."/>
            <person name="Sonnerborg A."/>
            <person name="Ayehunie S."/>
            <person name="Gotte D."/>
            <person name="Leinikki P."/>
            <person name="Burke D.S."/>
            <person name="McCutchan F.E."/>
        </authorList>
    </citation>
    <scope>NUCLEOTIDE SEQUENCE [GENOMIC DNA]</scope>
</reference>
<evidence type="ECO:0000255" key="1">
    <source>
        <dbReference type="HAMAP-Rule" id="MF_04080"/>
    </source>
</evidence>
<proteinExistence type="inferred from homology"/>
<accession>Q75004</accession>
<name>VPR_HV1ET</name>